<keyword id="KW-0963">Cytoplasm</keyword>
<keyword id="KW-0597">Phosphoprotein</keyword>
<keyword id="KW-0653">Protein transport</keyword>
<keyword id="KW-1185">Reference proteome</keyword>
<keyword id="KW-0813">Transport</keyword>
<protein>
    <recommendedName>
        <fullName>Alpha- and gamma-adaptin-binding protein p34</fullName>
    </recommendedName>
</protein>
<dbReference type="EMBL" id="CR857433">
    <property type="protein sequence ID" value="CAH89724.1"/>
    <property type="molecule type" value="mRNA"/>
</dbReference>
<dbReference type="RefSeq" id="NP_001124785.1">
    <property type="nucleotide sequence ID" value="NM_001131313.1"/>
</dbReference>
<dbReference type="SMR" id="Q5RET3"/>
<dbReference type="FunCoup" id="Q5RET3">
    <property type="interactions" value="2344"/>
</dbReference>
<dbReference type="STRING" id="9601.ENSPPYP00000007466"/>
<dbReference type="GeneID" id="100171638"/>
<dbReference type="KEGG" id="pon:100171638"/>
<dbReference type="CTD" id="79719"/>
<dbReference type="eggNOG" id="KOG4273">
    <property type="taxonomic scope" value="Eukaryota"/>
</dbReference>
<dbReference type="InParanoid" id="Q5RET3"/>
<dbReference type="OrthoDB" id="10261384at2759"/>
<dbReference type="Proteomes" id="UP000001595">
    <property type="component" value="Unplaced"/>
</dbReference>
<dbReference type="GO" id="GO:0005829">
    <property type="term" value="C:cytosol"/>
    <property type="evidence" value="ECO:0007669"/>
    <property type="project" value="UniProtKB-SubCell"/>
</dbReference>
<dbReference type="GO" id="GO:0015031">
    <property type="term" value="P:protein transport"/>
    <property type="evidence" value="ECO:0007669"/>
    <property type="project" value="UniProtKB-KW"/>
</dbReference>
<dbReference type="FunFam" id="3.40.50.11960:FF:000001">
    <property type="entry name" value="alpha- and gamma-adaptin-binding protein p34 isoform X1"/>
    <property type="match status" value="1"/>
</dbReference>
<dbReference type="Gene3D" id="3.40.50.11960">
    <property type="match status" value="1"/>
</dbReference>
<dbReference type="InterPro" id="IPR019341">
    <property type="entry name" value="Alpha/Gamma-adaptin-bd_p34"/>
</dbReference>
<dbReference type="PANTHER" id="PTHR14659">
    <property type="entry name" value="ALPHA- AND GAMMA-ADAPTIN-BINDING PROTEIN P34"/>
    <property type="match status" value="1"/>
</dbReference>
<dbReference type="PANTHER" id="PTHR14659:SF1">
    <property type="entry name" value="ALPHA- AND GAMMA-ADAPTIN-BINDING PROTEIN P34"/>
    <property type="match status" value="1"/>
</dbReference>
<dbReference type="Pfam" id="PF10199">
    <property type="entry name" value="Adaptin_binding"/>
    <property type="match status" value="1"/>
</dbReference>
<gene>
    <name type="primary">AAGAB</name>
</gene>
<accession>Q5RET3</accession>
<evidence type="ECO:0000250" key="1"/>
<evidence type="ECO:0000250" key="2">
    <source>
        <dbReference type="UniProtKB" id="Q6PD74"/>
    </source>
</evidence>
<evidence type="ECO:0000256" key="3">
    <source>
        <dbReference type="SAM" id="MobiDB-lite"/>
    </source>
</evidence>
<comment type="function">
    <text evidence="1">May be involved in endocytic recycling of growth factor receptors such as EGFR.</text>
</comment>
<comment type="subunit">
    <text evidence="1">Associated with AP-1 and AP-2 complexes.</text>
</comment>
<comment type="subcellular location">
    <subcellularLocation>
        <location evidence="1">Cytoplasm</location>
        <location evidence="1">Cytosol</location>
    </subcellularLocation>
</comment>
<organism>
    <name type="scientific">Pongo abelii</name>
    <name type="common">Sumatran orangutan</name>
    <name type="synonym">Pongo pygmaeus abelii</name>
    <dbReference type="NCBI Taxonomy" id="9601"/>
    <lineage>
        <taxon>Eukaryota</taxon>
        <taxon>Metazoa</taxon>
        <taxon>Chordata</taxon>
        <taxon>Craniata</taxon>
        <taxon>Vertebrata</taxon>
        <taxon>Euteleostomi</taxon>
        <taxon>Mammalia</taxon>
        <taxon>Eutheria</taxon>
        <taxon>Euarchontoglires</taxon>
        <taxon>Primates</taxon>
        <taxon>Haplorrhini</taxon>
        <taxon>Catarrhini</taxon>
        <taxon>Hominidae</taxon>
        <taxon>Pongo</taxon>
    </lineage>
</organism>
<name>AAGAB_PONAB</name>
<sequence>MAAGVPCALVTSCSSAFSGDQLVQHILGTEDLIVELTSNDAVRFYPWTIDNKYYSADINLCVVPNKFLVTAEIAESVQAFVVYFDGTQKSGLDSVSSWLPLAEAWLPEVMILVCDRVSEDGINRQKAQEWCIKHGFELVELSPEELPEEDDDFPESTGVKRIVQALNANVWSNVVMKNDRNQGFSLLNSLTGTNHSIGSADPCHPEQPHLPAADRTESLSDHRGGASNTTDAQVDSIVDPMLDLDIQELASLTTGGGDVENFERLFSKLKEMKDKAATLPHEQRKVHAEKVAKAFWMAIGGDRDEIEGLSSDEEH</sequence>
<proteinExistence type="evidence at transcript level"/>
<feature type="chain" id="PRO_0000058136" description="Alpha- and gamma-adaptin-binding protein p34">
    <location>
        <begin position="1"/>
        <end position="315"/>
    </location>
</feature>
<feature type="region of interest" description="Disordered" evidence="3">
    <location>
        <begin position="197"/>
        <end position="233"/>
    </location>
</feature>
<feature type="compositionally biased region" description="Basic and acidic residues" evidence="3">
    <location>
        <begin position="203"/>
        <end position="224"/>
    </location>
</feature>
<feature type="modified residue" description="Phosphoserine" evidence="2">
    <location>
        <position position="310"/>
    </location>
</feature>
<feature type="modified residue" description="Phosphoserine" evidence="2">
    <location>
        <position position="311"/>
    </location>
</feature>
<reference key="1">
    <citation type="submission" date="2004-11" db="EMBL/GenBank/DDBJ databases">
        <authorList>
            <consortium name="The German cDNA consortium"/>
        </authorList>
    </citation>
    <scope>NUCLEOTIDE SEQUENCE [LARGE SCALE MRNA]</scope>
    <source>
        <tissue>Kidney</tissue>
    </source>
</reference>